<keyword id="KW-0378">Hydrolase</keyword>
<keyword id="KW-0460">Magnesium</keyword>
<keyword id="KW-0479">Metal-binding</keyword>
<keyword id="KW-0546">Nucleotide metabolism</keyword>
<proteinExistence type="inferred from homology"/>
<reference key="1">
    <citation type="journal article" date="2005" name="J. Bacteriol.">
        <title>Completion of the genome sequence of Brucella abortus and comparison to the highly similar genomes of Brucella melitensis and Brucella suis.</title>
        <authorList>
            <person name="Halling S.M."/>
            <person name="Peterson-Burch B.D."/>
            <person name="Bricker B.J."/>
            <person name="Zuerner R.L."/>
            <person name="Qing Z."/>
            <person name="Li L.-L."/>
            <person name="Kapur V."/>
            <person name="Alt D.P."/>
            <person name="Olsen S.C."/>
        </authorList>
    </citation>
    <scope>NUCLEOTIDE SEQUENCE [LARGE SCALE GENOMIC DNA]</scope>
    <source>
        <strain>9-941</strain>
    </source>
</reference>
<sequence length="157" mass="16660">MTAASSSAPTLGIIRLEHAKGLDLPAYETAGSAGMDLRAAVAEDRQIVLLPGRRTLVPTGLILEIPQGYEVQIRPRSGLAFKNGITCLNTPGTIDSDYRGEVKVLLINLGDDDFRIERGMRIAQAVFAPVIQPKIEERAKISETARGAGGFGSTGTA</sequence>
<name>DUT_BRUAB</name>
<organism>
    <name type="scientific">Brucella abortus biovar 1 (strain 9-941)</name>
    <dbReference type="NCBI Taxonomy" id="262698"/>
    <lineage>
        <taxon>Bacteria</taxon>
        <taxon>Pseudomonadati</taxon>
        <taxon>Pseudomonadota</taxon>
        <taxon>Alphaproteobacteria</taxon>
        <taxon>Hyphomicrobiales</taxon>
        <taxon>Brucellaceae</taxon>
        <taxon>Brucella/Ochrobactrum group</taxon>
        <taxon>Brucella</taxon>
    </lineage>
</organism>
<comment type="function">
    <text evidence="1">This enzyme is involved in nucleotide metabolism: it produces dUMP, the immediate precursor of thymidine nucleotides and it decreases the intracellular concentration of dUTP so that uracil cannot be incorporated into DNA.</text>
</comment>
<comment type="catalytic activity">
    <reaction evidence="1">
        <text>dUTP + H2O = dUMP + diphosphate + H(+)</text>
        <dbReference type="Rhea" id="RHEA:10248"/>
        <dbReference type="ChEBI" id="CHEBI:15377"/>
        <dbReference type="ChEBI" id="CHEBI:15378"/>
        <dbReference type="ChEBI" id="CHEBI:33019"/>
        <dbReference type="ChEBI" id="CHEBI:61555"/>
        <dbReference type="ChEBI" id="CHEBI:246422"/>
        <dbReference type="EC" id="3.6.1.23"/>
    </reaction>
</comment>
<comment type="cofactor">
    <cofactor evidence="1">
        <name>Mg(2+)</name>
        <dbReference type="ChEBI" id="CHEBI:18420"/>
    </cofactor>
</comment>
<comment type="pathway">
    <text evidence="1">Pyrimidine metabolism; dUMP biosynthesis; dUMP from dCTP (dUTP route): step 2/2.</text>
</comment>
<comment type="similarity">
    <text evidence="1">Belongs to the dUTPase family.</text>
</comment>
<protein>
    <recommendedName>
        <fullName evidence="1">Deoxyuridine 5'-triphosphate nucleotidohydrolase</fullName>
        <shortName evidence="1">dUTPase</shortName>
        <ecNumber evidence="1">3.6.1.23</ecNumber>
    </recommendedName>
    <alternativeName>
        <fullName evidence="1">dUTP pyrophosphatase</fullName>
    </alternativeName>
</protein>
<evidence type="ECO:0000255" key="1">
    <source>
        <dbReference type="HAMAP-Rule" id="MF_00116"/>
    </source>
</evidence>
<gene>
    <name evidence="1" type="primary">dut</name>
    <name type="ordered locus">BruAb1_1660</name>
</gene>
<accession>Q57BK5</accession>
<feature type="chain" id="PRO_0000231400" description="Deoxyuridine 5'-triphosphate nucleotidohydrolase">
    <location>
        <begin position="1"/>
        <end position="157"/>
    </location>
</feature>
<feature type="binding site" evidence="1">
    <location>
        <begin position="76"/>
        <end position="78"/>
    </location>
    <ligand>
        <name>substrate</name>
    </ligand>
</feature>
<feature type="binding site" evidence="1">
    <location>
        <position position="89"/>
    </location>
    <ligand>
        <name>substrate</name>
    </ligand>
</feature>
<feature type="binding site" evidence="1">
    <location>
        <begin position="93"/>
        <end position="95"/>
    </location>
    <ligand>
        <name>substrate</name>
    </ligand>
</feature>
<feature type="binding site" evidence="1">
    <location>
        <position position="103"/>
    </location>
    <ligand>
        <name>substrate</name>
    </ligand>
</feature>
<dbReference type="EC" id="3.6.1.23" evidence="1"/>
<dbReference type="EMBL" id="AE017223">
    <property type="protein sequence ID" value="AAX74979.1"/>
    <property type="molecule type" value="Genomic_DNA"/>
</dbReference>
<dbReference type="RefSeq" id="WP_002964766.1">
    <property type="nucleotide sequence ID" value="NC_006932.1"/>
</dbReference>
<dbReference type="SMR" id="Q57BK5"/>
<dbReference type="EnsemblBacteria" id="AAX74979">
    <property type="protein sequence ID" value="AAX74979"/>
    <property type="gene ID" value="BruAb1_1660"/>
</dbReference>
<dbReference type="GeneID" id="97533165"/>
<dbReference type="KEGG" id="bmb:BruAb1_1660"/>
<dbReference type="HOGENOM" id="CLU_068508_1_0_5"/>
<dbReference type="UniPathway" id="UPA00610">
    <property type="reaction ID" value="UER00666"/>
</dbReference>
<dbReference type="PRO" id="PR:Q57BK5"/>
<dbReference type="Proteomes" id="UP000000540">
    <property type="component" value="Chromosome I"/>
</dbReference>
<dbReference type="GO" id="GO:0004170">
    <property type="term" value="F:dUTP diphosphatase activity"/>
    <property type="evidence" value="ECO:0007669"/>
    <property type="project" value="UniProtKB-UniRule"/>
</dbReference>
<dbReference type="GO" id="GO:0000287">
    <property type="term" value="F:magnesium ion binding"/>
    <property type="evidence" value="ECO:0007669"/>
    <property type="project" value="UniProtKB-UniRule"/>
</dbReference>
<dbReference type="GO" id="GO:0006226">
    <property type="term" value="P:dUMP biosynthetic process"/>
    <property type="evidence" value="ECO:0007669"/>
    <property type="project" value="UniProtKB-UniRule"/>
</dbReference>
<dbReference type="GO" id="GO:0046081">
    <property type="term" value="P:dUTP catabolic process"/>
    <property type="evidence" value="ECO:0007669"/>
    <property type="project" value="InterPro"/>
</dbReference>
<dbReference type="CDD" id="cd07557">
    <property type="entry name" value="trimeric_dUTPase"/>
    <property type="match status" value="1"/>
</dbReference>
<dbReference type="Gene3D" id="2.70.40.10">
    <property type="match status" value="1"/>
</dbReference>
<dbReference type="HAMAP" id="MF_00116">
    <property type="entry name" value="dUTPase_bact"/>
    <property type="match status" value="1"/>
</dbReference>
<dbReference type="InterPro" id="IPR008181">
    <property type="entry name" value="dUTPase"/>
</dbReference>
<dbReference type="InterPro" id="IPR029054">
    <property type="entry name" value="dUTPase-like"/>
</dbReference>
<dbReference type="InterPro" id="IPR036157">
    <property type="entry name" value="dUTPase-like_sf"/>
</dbReference>
<dbReference type="InterPro" id="IPR033704">
    <property type="entry name" value="dUTPase_trimeric"/>
</dbReference>
<dbReference type="NCBIfam" id="TIGR00576">
    <property type="entry name" value="dut"/>
    <property type="match status" value="1"/>
</dbReference>
<dbReference type="NCBIfam" id="NF001862">
    <property type="entry name" value="PRK00601.1"/>
    <property type="match status" value="1"/>
</dbReference>
<dbReference type="PANTHER" id="PTHR11241">
    <property type="entry name" value="DEOXYURIDINE 5'-TRIPHOSPHATE NUCLEOTIDOHYDROLASE"/>
    <property type="match status" value="1"/>
</dbReference>
<dbReference type="PANTHER" id="PTHR11241:SF0">
    <property type="entry name" value="DEOXYURIDINE 5'-TRIPHOSPHATE NUCLEOTIDOHYDROLASE"/>
    <property type="match status" value="1"/>
</dbReference>
<dbReference type="Pfam" id="PF00692">
    <property type="entry name" value="dUTPase"/>
    <property type="match status" value="1"/>
</dbReference>
<dbReference type="SUPFAM" id="SSF51283">
    <property type="entry name" value="dUTPase-like"/>
    <property type="match status" value="1"/>
</dbReference>